<keyword id="KW-0014">AIDS</keyword>
<keyword id="KW-0064">Aspartyl protease</keyword>
<keyword id="KW-0167">Capsid protein</keyword>
<keyword id="KW-0229">DNA integration</keyword>
<keyword id="KW-0233">DNA recombination</keyword>
<keyword id="KW-0238">DNA-binding</keyword>
<keyword id="KW-0239">DNA-directed DNA polymerase</keyword>
<keyword id="KW-0255">Endonuclease</keyword>
<keyword id="KW-1262">Eukaryotic host gene expression shutoff by virus</keyword>
<keyword id="KW-1193">Eukaryotic host translation shutoff by virus</keyword>
<keyword id="KW-1032">Host cell membrane</keyword>
<keyword id="KW-1035">Host cytoplasm</keyword>
<keyword id="KW-1039">Host endosome</keyword>
<keyword id="KW-1190">Host gene expression shutoff by virus</keyword>
<keyword id="KW-1043">Host membrane</keyword>
<keyword id="KW-1048">Host nucleus</keyword>
<keyword id="KW-0945">Host-virus interaction</keyword>
<keyword id="KW-0378">Hydrolase</keyword>
<keyword id="KW-0446">Lipid-binding</keyword>
<keyword id="KW-0449">Lipoprotein</keyword>
<keyword id="KW-0460">Magnesium</keyword>
<keyword id="KW-0472">Membrane</keyword>
<keyword id="KW-0479">Metal-binding</keyword>
<keyword id="KW-0511">Multifunctional enzyme</keyword>
<keyword id="KW-0519">Myristate</keyword>
<keyword id="KW-0540">Nuclease</keyword>
<keyword id="KW-0548">Nucleotidyltransferase</keyword>
<keyword id="KW-0645">Protease</keyword>
<keyword id="KW-0677">Repeat</keyword>
<keyword id="KW-0688">Ribosomal frameshifting</keyword>
<keyword id="KW-0694">RNA-binding</keyword>
<keyword id="KW-0695">RNA-directed DNA polymerase</keyword>
<keyword id="KW-0808">Transferase</keyword>
<keyword id="KW-1179">Viral genome integration</keyword>
<keyword id="KW-0543">Viral nucleoprotein</keyword>
<keyword id="KW-1163">Viral penetration into host nucleus</keyword>
<keyword id="KW-1188">Viral release from host cell</keyword>
<keyword id="KW-0946">Virion</keyword>
<keyword id="KW-0917">Virion maturation</keyword>
<keyword id="KW-1160">Virus entry into host cell</keyword>
<keyword id="KW-0862">Zinc</keyword>
<keyword id="KW-0863">Zinc-finger</keyword>
<comment type="function">
    <molecule>Gag-Pol polyprotein</molecule>
    <text evidence="1">Mediates, with Gag polyprotein, the essential events in virion assembly, including binding the plasma membrane, making the protein-protein interactions necessary to create spherical particles, recruiting the viral Env proteins, and packaging the genomic RNA via direct interactions with the RNA packaging sequence (Psi). Gag-Pol polyprotein may regulate its own translation, by the binding genomic RNA in the 5'-UTR. At low concentration, the polyprotein would promote translation, whereas at high concentration, the polyprotein would encapsidate genomic RNA and then shut off translation.</text>
</comment>
<comment type="function">
    <molecule>Matrix protein p17</molecule>
    <text evidence="8">Targets the polyprotein to the plasma membrane via a multipartite membrane-binding signal, that includes its myristoylated N-terminus. Matrix protein is part of the pre-integration complex. Implicated in the release from host cell mediated by Vpu. Binds to RNA.</text>
</comment>
<comment type="function">
    <molecule>Capsid protein p24</molecule>
    <text evidence="5 8">Forms the conical core that encapsulates the genomic RNA-nucleocapsid complex in the virion. Most core are conical, with only 7% tubular. The core is constituted by capsid protein hexamer subunits. The core is disassembled soon after virion entry (By similarity). Host restriction factors such as TRIM5-alpha or TRIMCyp bind retroviral capsids and cause premature capsid disassembly, leading to blocks in reverse transcription. Capsid restriction by TRIM5 is one of the factors which restricts HIV-1 to the human species. Host PIN1 apparently facilitates the virion uncoating. On the other hand, interactions with PDZD8 or CYPA stabilize the capsid.</text>
</comment>
<comment type="function">
    <molecule>Nucleocapsid protein p7</molecule>
    <text evidence="5">Encapsulates and protects viral dimeric unspliced genomic RNA (gRNA). Binds these RNAs through its zinc fingers. Acts as a nucleic acid chaperone which is involved in rearangement of nucleic acid secondary structure during gRNA retrotranscription. Also facilitates template switch leading to recombination. As part of the polyprotein, participates in gRNA dimerization, packaging, tRNA incorporation and virion assembly.</text>
</comment>
<comment type="function">
    <molecule>Protease</molecule>
    <text evidence="5 11">Aspartyl protease that mediates proteolytic cleavages of Gag and Gag-Pol polyproteins during or shortly after the release of the virion from the plasma membrane. Cleavages take place as an ordered, step-wise cascade to yield mature proteins. This process is called maturation. Displays maximal activity during the budding process just prior to particle release from the cell. Also cleaves Nef and Vif, probably concomitantly with viral structural proteins on maturation of virus particles. Hydrolyzes host EIF4GI and PABP1 in order to shut off the capped cellular mRNA translation. The resulting inhibition of cellular protein synthesis serves to ensure maximal viral gene expression and to evade host immune response (By similarity).</text>
</comment>
<comment type="function">
    <molecule>Reverse transcriptase/ribonuclease H</molecule>
    <text evidence="5">Multifunctional enzyme that converts the viral RNA genome into dsDNA in the cytoplasm, shortly after virus entry into the cell. This enzyme displays a DNA polymerase activity that can copy either DNA or RNA templates, and a ribonuclease H (RNase H) activity that cleaves the RNA strand of RNA-DNA heteroduplexes in a partially processive 3' to 5' endonucleasic mode. Conversion of viral genomic RNA into dsDNA requires many steps. A tRNA(3)-Lys binds to the primer-binding site (PBS) situated at the 5'-end of the viral RNA. RT uses the 3' end of the tRNA primer to perform a short round of RNA-dependent minus-strand DNA synthesis. The reading proceeds through the U5 region and ends after the repeated (R) region which is present at both ends of viral RNA. The portion of the RNA-DNA heteroduplex is digested by the RNase H, resulting in a ssDNA product attached to the tRNA primer. This ssDNA/tRNA hybridizes with the identical R region situated at the 3' end of viral RNA. This template exchange, known as minus-strand DNA strong stop transfer, can be either intra- or intermolecular. RT uses the 3' end of this newly synthesized short ssDNA to perform the RNA-dependent minus-strand DNA synthesis of the whole template. RNase H digests the RNA template except for two polypurine tracts (PPTs) situated at the 5'-end and near the center of the genome. It is not clear if both polymerase and RNase H activities are simultaneous. RNase H probably can proceed both in a polymerase-dependent (RNA cut into small fragments by the same RT performing DNA synthesis) and a polymerase-independent mode (cleavage of remaining RNA fragments by free RTs). Secondly, RT performs DNA-directed plus-strand DNA synthesis using the PPTs that have not been removed by RNase H as primers. PPTs and tRNA primers are then removed by RNase H. The 3' and 5' ssDNA PBS regions hybridize to form a circular dsDNA intermediate. Strand displacement synthesis by RT to the PBS and PPT ends produces a blunt ended, linear dsDNA copy of the viral genome that includes long terminal repeats (LTRs) at both ends.</text>
</comment>
<comment type="function">
    <molecule>Integrase</molecule>
    <text evidence="5">Catalyzes viral DNA integration into the host chromosome, by performing a series of DNA cutting and joining reactions. This enzyme activity takes place after virion entry into a cell and reverse transcription of the RNA genome in dsDNA. The first step in the integration process is 3' processing. This step requires a complex comprising the viral genome, matrix protein, Vpr and integrase. This complex is called the pre-integration complex (PIC). The integrase protein removes 2 nucleotides from each 3' end of the viral DNA, leaving recessed CA OH's at the 3' ends. In the second step, the PIC enters cell nucleus. This process is mediated through integrase and Vpr proteins, and allows the virus to infect a non dividing cell. This ability to enter the nucleus is specific of lentiviruses, other retroviruses cannot and rely on cell division to access cell chromosomes. In the third step, termed strand transfer, the integrase protein joins the previously processed 3' ends to the 5' ends of strands of target cellular DNA at the site of integration. The 5'-ends are produced by integrase-catalyzed staggered cuts, 5 bp apart. A Y-shaped, gapped, recombination intermediate results, with the 5'-ends of the viral DNA strands and the 3' ends of target DNA strands remaining unjoined, flanking a gap of 5 bp. The last step is viral DNA integration into host chromosome. This involves host DNA repair synthesis in which the 5 bp gaps between the unjoined strands are filled in and then ligated. Since this process occurs at both cuts flanking the HIV genome, a 5 bp duplication of host DNA is produced at the ends of HIV-1 integration. Alternatively, Integrase may catalyze the excision of viral DNA just after strand transfer, this is termed disintegration.</text>
</comment>
<comment type="catalytic activity">
    <reaction evidence="11">
        <text>Endopeptidase for which the P1 residue is preferably hydrophobic.</text>
        <dbReference type="EC" id="3.4.23.47"/>
    </reaction>
</comment>
<comment type="catalytic activity">
    <reaction evidence="1">
        <text>Endohydrolysis of RNA in RNA/DNA hybrids. Three different cleavage modes: 1. sequence-specific internal cleavage of RNA. Human immunodeficiency virus type 1 and Moloney murine leukemia virus enzymes prefer to cleave the RNA strand one nucleotide away from the RNA-DNA junction. 2. RNA 5'-end directed cleavage 13-19 nucleotides from the RNA end. 3. DNA 3'-end directed cleavage 15-20 nucleotides away from the primer terminus.</text>
        <dbReference type="EC" id="3.1.26.13"/>
    </reaction>
</comment>
<comment type="catalytic activity">
    <reaction evidence="1">
        <text>3'-end directed exonucleolytic cleavage of viral RNA-DNA hybrid.</text>
        <dbReference type="EC" id="3.1.13.2"/>
    </reaction>
</comment>
<comment type="catalytic activity">
    <reaction evidence="12">
        <text>DNA(n) + a 2'-deoxyribonucleoside 5'-triphosphate = DNA(n+1) + diphosphate</text>
        <dbReference type="Rhea" id="RHEA:22508"/>
        <dbReference type="Rhea" id="RHEA-COMP:17339"/>
        <dbReference type="Rhea" id="RHEA-COMP:17340"/>
        <dbReference type="ChEBI" id="CHEBI:33019"/>
        <dbReference type="ChEBI" id="CHEBI:61560"/>
        <dbReference type="ChEBI" id="CHEBI:173112"/>
        <dbReference type="EC" id="2.7.7.49"/>
    </reaction>
</comment>
<comment type="catalytic activity">
    <reaction evidence="12">
        <text>DNA(n) + a 2'-deoxyribonucleoside 5'-triphosphate = DNA(n+1) + diphosphate</text>
        <dbReference type="Rhea" id="RHEA:22508"/>
        <dbReference type="Rhea" id="RHEA-COMP:17339"/>
        <dbReference type="Rhea" id="RHEA-COMP:17340"/>
        <dbReference type="ChEBI" id="CHEBI:33019"/>
        <dbReference type="ChEBI" id="CHEBI:61560"/>
        <dbReference type="ChEBI" id="CHEBI:173112"/>
        <dbReference type="EC" id="2.7.7.7"/>
    </reaction>
</comment>
<comment type="cofactor">
    <cofactor evidence="1">
        <name>Mg(2+)</name>
        <dbReference type="ChEBI" id="CHEBI:18420"/>
    </cofactor>
    <text evidence="1">Binds 2 magnesium ions for reverse transcriptase polymerase activity.</text>
</comment>
<comment type="cofactor">
    <cofactor evidence="1">
        <name>Mg(2+)</name>
        <dbReference type="ChEBI" id="CHEBI:18420"/>
    </cofactor>
    <text evidence="1">Binds 2 magnesium ions for ribonuclease H (RNase H) activity. Substrate-binding is a precondition for magnesium binding.</text>
</comment>
<comment type="cofactor">
    <cofactor evidence="1">
        <name>Mg(2+)</name>
        <dbReference type="ChEBI" id="CHEBI:18420"/>
    </cofactor>
    <text evidence="1">Magnesium ions are required for integrase activity. Binds at least 1, maybe 2 magnesium ions.</text>
</comment>
<comment type="activity regulation">
    <text evidence="1">Protease: The viral protease is inhibited by many synthetic protease inhibitors (PIs), such as amprenavir, atazanavir, indinavir, loprinavir, nelfinavir, ritonavir and saquinavir. Use of protease inhibitors in tritherapy regimens permit more ambitious therapeutic strategies. Reverse transcriptase/ribonuclease H: RT can be inhibited either by nucleoside RT inhibitors (NRTIs) or by non nucleoside RT inhibitors (NNRTIs). NRTIs act as chain terminators, whereas NNRTIs inhibit DNA polymerization by binding a small hydrophobic pocket near the RT active site and inducing an allosteric change in this region. Classical NRTIs are abacavir, adefovir (PMEA), didanosine (ddI), lamivudine (3TC), stavudine (d4T), tenofovir (PMPA), zalcitabine (ddC), and zidovudine (AZT). Classical NNRTIs are atevirdine (BHAP U-87201E), delavirdine, efavirenz (DMP-266), emivirine (I-EBU), and nevirapine (BI-RG-587). The tritherapies used as a basic effective treatment of AIDS associate two NRTIs and one NNRTI.</text>
</comment>
<comment type="subunit">
    <molecule>Matrix protein p17</molecule>
    <text evidence="6 7">Homotrimer; further assembles as hexamers of trimers. Interacts with gp41 (via C-terminus). Interacts with host CALM1; this interaction induces a conformational change in the Matrix protein, triggering exposure of the myristate group. Interacts with host AP3D1; this interaction allows the polyprotein trafficking to multivesicular bodies during virus assembly. Part of the pre-integration complex (PIC) which is composed of viral genome, matrix protein, Vpr and integrase.</text>
</comment>
<comment type="subunit">
    <molecule>Capsid protein p24</molecule>
    <text evidence="2 6 7">Homodimer; the homodimer further multimerizes as homohexamers or homopentamers. Interacts with human PPIA/CYPA. Interacts with human NUP153. Interacts with host PDZD8; this interaction stabilizes the capsid. Interacts with monkey TRIM5; this interaction destabilizes the capsid.</text>
</comment>
<comment type="subunit">
    <molecule>Protease</molecule>
    <text evidence="5 8">Homodimer, whose active site consists of two apposed aspartic acid residues.</text>
</comment>
<comment type="subunit">
    <molecule>Reverse transcriptase/ribonuclease H</molecule>
    <text evidence="3">Heterodimer of p66 RT and p51 RT (RT p66/p51) (By similarity). Heterodimerization of RT is essential for DNA polymerase activity (By similarity). The overall folding of the subdomains is similar in p66 RT and p51 RT but the spatial arrangements of the subdomains are dramatically different (By similarity).</text>
</comment>
<comment type="subunit">
    <molecule>Integrase</molecule>
    <text evidence="4 5 8">Homotetramer; may further associate as a homohexadecamer (By similarity). Part of the pre-integration complex (PIC) which is composed of viral genome, matrix protein, Vpr and integrase. Interacts with human SMARCB1/INI1 and human PSIP1/LEDGF isoform 1. Interacts with human KPNA3; this interaction might play a role in nuclear import of the pre-integration complex (By similarity). Interacts with human NUP153; this interaction might play a role in nuclear import of the pre-integration complex (By similarity).</text>
</comment>
<comment type="subcellular location">
    <molecule>Gag-Pol polyprotein</molecule>
    <subcellularLocation>
        <location>Host cell membrane</location>
        <topology>Lipid-anchor</topology>
    </subcellularLocation>
    <subcellularLocation>
        <location>Host endosome</location>
        <location>Host multivesicular body</location>
    </subcellularLocation>
    <text evidence="8">These locations are linked to virus assembly sites. The main location is the cell membrane, but under some circumstances, late endosomal compartments can serve as productive sites for virion assembly.</text>
</comment>
<comment type="subcellular location">
    <molecule>Matrix protein p17</molecule>
    <subcellularLocation>
        <location>Virion membrane</location>
        <topology evidence="18">Lipid-anchor</topology>
    </subcellularLocation>
    <subcellularLocation>
        <location evidence="1">Host nucleus</location>
    </subcellularLocation>
    <subcellularLocation>
        <location evidence="1">Host cytoplasm</location>
    </subcellularLocation>
</comment>
<comment type="subcellular location">
    <molecule>Capsid protein p24</molecule>
    <subcellularLocation>
        <location evidence="18">Virion</location>
    </subcellularLocation>
</comment>
<comment type="subcellular location">
    <molecule>Nucleocapsid protein p7</molecule>
    <subcellularLocation>
        <location evidence="18">Virion</location>
    </subcellularLocation>
</comment>
<comment type="subcellular location">
    <molecule>Reverse transcriptase/ribonuclease H</molecule>
    <subcellularLocation>
        <location evidence="18">Virion</location>
    </subcellularLocation>
</comment>
<comment type="subcellular location">
    <molecule>Integrase</molecule>
    <subcellularLocation>
        <location evidence="18">Virion</location>
    </subcellularLocation>
    <subcellularLocation>
        <location evidence="18">Host nucleus</location>
    </subcellularLocation>
    <subcellularLocation>
        <location evidence="18">Host cytoplasm</location>
    </subcellularLocation>
    <text evidence="18">Nuclear at initial phase, cytoplasmic at assembly.</text>
</comment>
<comment type="alternative products">
    <event type="ribosomal frameshifting"/>
    <isoform>
        <id>P05962-1</id>
        <name>Gag-Pol polyprotein</name>
        <sequence type="displayed"/>
    </isoform>
    <isoform>
        <id>P05891-1</id>
        <name>Gag polyprotein</name>
        <sequence type="external"/>
    </isoform>
    <text>Translation results in the formation of the Gag polyprotein most of the time. Ribosomal frameshifting at the gag-pol genes boundary occurs at low frequency and produces the Gag-Pol polyprotein. This strategy of translation probably allows the virus to modulate the quantity of each viral protein. Maintenance of a correct Gag to Gag-Pol ratio is essential for RNA dimerization and viral infectivity.</text>
</comment>
<comment type="domain">
    <molecule>Reverse transcriptase/ribonuclease H</molecule>
    <text evidence="1">RT is structured in five subdomains: finger, palm, thumb, connection and RNase H. Within the palm subdomain, the 'primer grip' region is thought to be involved in the positioning of the primer terminus for accommodating the incoming nucleotide. The RNase H domain stabilizes the association of RT with primer-template.</text>
</comment>
<comment type="domain">
    <molecule>Reverse transcriptase/ribonuclease H</molecule>
    <text evidence="1">The tryptophan repeat motif is involved in RT p66/p51 dimerization (By similarity).</text>
</comment>
<comment type="domain">
    <molecule>Integrase</molecule>
    <text evidence="1">The core domain contains the D-x(n)-D-x(35)-E motif, named for the phylogenetically conserved glutamic acid and aspartic acid residues and the invariant 35 amino acid spacing between the second and third acidic residues. Each acidic residue of the D,D(35)E motif is independently essential for the 3'-processing and strand transfer activities of purified integrase protein.</text>
</comment>
<comment type="PTM">
    <molecule>Gag-Pol polyprotein</molecule>
    <text evidence="5 12">Specific enzymatic cleavages by the viral protease yield mature proteins. The protease is released by autocatalytic cleavage. The polyprotein is cleaved during and after budding, this process is termed maturation. Proteolytic cleavage of p66 RT removes the RNase H domain to yield the p51 RT subunit. Nucleocapsid protein p7 might be further cleaved after virus entry.</text>
</comment>
<comment type="miscellaneous">
    <molecule>Reverse transcriptase/ribonuclease H</molecule>
    <text evidence="1">Error-prone enzyme that lacks a proof-reading function. High mutations rate is a direct consequence of this characteristic. RT also displays frequent template switching leading to high recombination rate. Recombination mostly occurs between homologous regions of the two copackaged RNA genomes. If these two RNA molecules derive from different viral strains, reverse transcription will give rise to highly recombinated proviral DNAs.</text>
</comment>
<comment type="miscellaneous">
    <molecule>Isoform Gag-Pol polyprotein</molecule>
    <text>Produced by -1 ribosomal frameshifting.</text>
</comment>
<protein>
    <recommendedName>
        <fullName>Gag-Pol polyprotein</fullName>
    </recommendedName>
    <alternativeName>
        <fullName>Pr160Gag-Pol</fullName>
    </alternativeName>
    <component>
        <recommendedName>
            <fullName>Matrix protein p17</fullName>
            <shortName>MA</shortName>
        </recommendedName>
    </component>
    <component>
        <recommendedName>
            <fullName>Capsid protein p24</fullName>
            <shortName>CA</shortName>
        </recommendedName>
    </component>
    <component>
        <recommendedName>
            <fullName evidence="8">Spacer peptide 1</fullName>
            <shortName>SP1</shortName>
        </recommendedName>
        <alternativeName>
            <fullName>p2</fullName>
        </alternativeName>
    </component>
    <component>
        <recommendedName>
            <fullName>Nucleocapsid protein p7</fullName>
            <shortName>NC</shortName>
        </recommendedName>
    </component>
    <component>
        <recommendedName>
            <fullName>Transframe peptide</fullName>
            <shortName>TF</shortName>
        </recommendedName>
    </component>
    <component>
        <recommendedName>
            <fullName>p6-pol</fullName>
            <shortName>p6*</shortName>
        </recommendedName>
    </component>
    <component>
        <recommendedName>
            <fullName>Protease</fullName>
            <ecNumber>3.4.23.47</ecNumber>
        </recommendedName>
        <alternativeName>
            <fullName>PR</fullName>
        </alternativeName>
        <alternativeName>
            <fullName>Retropepsin</fullName>
        </alternativeName>
    </component>
    <component>
        <recommendedName>
            <fullName>Reverse transcriptase/ribonuclease H</fullName>
            <ecNumber>2.7.7.49</ecNumber>
            <ecNumber>2.7.7.7</ecNumber>
            <ecNumber>3.1.26.13</ecNumber>
        </recommendedName>
        <alternativeName>
            <fullName>Exoribonuclease H</fullName>
            <ecNumber>3.1.13.2</ecNumber>
        </alternativeName>
        <alternativeName>
            <fullName>p66 RT</fullName>
        </alternativeName>
    </component>
    <component>
        <recommendedName>
            <fullName>p51 RT</fullName>
        </recommendedName>
    </component>
    <component>
        <recommendedName>
            <fullName>p15</fullName>
        </recommendedName>
    </component>
    <component>
        <recommendedName>
            <fullName>Integrase</fullName>
            <shortName>IN</shortName>
            <ecNumber evidence="5">2.7.7.-</ecNumber>
            <ecNumber evidence="5">3.1.-.-</ecNumber>
        </recommendedName>
    </component>
</protein>
<reference key="1">
    <citation type="journal article" date="1988" name="Proc. Natl. Acad. Sci. U.S.A.">
        <title>Genetic variability between isolates of human immunodeficiency virus (HIV) type 2 is comparable to the variability among HIV type 1.</title>
        <authorList>
            <person name="Zagury J.F."/>
            <person name="Franchini G."/>
            <person name="Reitz M.S. Jr."/>
            <person name="Collalti E."/>
            <person name="Starcich B.R."/>
            <person name="Hall L."/>
            <person name="Fargnoli K.A."/>
            <person name="Jagodzinski L.L."/>
            <person name="Guo H.-G."/>
            <person name="Laure F."/>
            <person name="Arya S.K."/>
            <person name="Josephs S.F."/>
            <person name="Zagury D."/>
            <person name="Wong-Staal F."/>
            <person name="Gallo R.C."/>
        </authorList>
    </citation>
    <scope>NUCLEOTIDE SEQUENCE [GENOMIC DNA]</scope>
</reference>
<reference key="2">
    <citation type="journal article" date="1996" name="Curr. Top. Microbiol. Immunol.">
        <title>Proteolytic processing and particle maturation.</title>
        <authorList>
            <person name="Vogt V.M."/>
        </authorList>
    </citation>
    <scope>REVIEW</scope>
</reference>
<reference key="3">
    <citation type="journal article" date="1999" name="J. Mol. Biol.">
        <title>Structural biology of HIV.</title>
        <authorList>
            <person name="Turner B.G."/>
            <person name="Summers M.F."/>
        </authorList>
    </citation>
    <scope>REVIEW</scope>
</reference>
<reference key="4">
    <citation type="journal article" date="2001" name="Annu. Rev. Genet.">
        <title>Mechanisms of retroviral recombination.</title>
        <authorList>
            <person name="Negroni M."/>
            <person name="Buc H."/>
        </authorList>
    </citation>
    <scope>REVIEW</scope>
</reference>
<reference key="5">
    <citation type="journal article" date="2002" name="Genome Biol.">
        <title>Retroviral proteases.</title>
        <authorList>
            <person name="Dunn B.M."/>
            <person name="Goodenow M.M."/>
            <person name="Gustchina A."/>
            <person name="Wlodawer A."/>
        </authorList>
    </citation>
    <scope>REVIEW</scope>
</reference>
<dbReference type="EC" id="3.4.23.47"/>
<dbReference type="EC" id="2.7.7.49"/>
<dbReference type="EC" id="2.7.7.7"/>
<dbReference type="EC" id="3.1.26.13"/>
<dbReference type="EC" id="3.1.13.2"/>
<dbReference type="EC" id="2.7.7.-" evidence="5"/>
<dbReference type="EC" id="3.1.-.-" evidence="5"/>
<dbReference type="EMBL" id="J03654">
    <property type="protein sequence ID" value="AAB00755.1"/>
    <property type="status" value="ALT_SEQ"/>
    <property type="molecule type" value="Genomic_DNA"/>
</dbReference>
<dbReference type="SMR" id="P05962"/>
<dbReference type="MEROPS" id="A02.002"/>
<dbReference type="PRO" id="PR:P05962"/>
<dbReference type="Proteomes" id="UP000246679">
    <property type="component" value="Segment"/>
</dbReference>
<dbReference type="GO" id="GO:0043657">
    <property type="term" value="C:host cell"/>
    <property type="evidence" value="ECO:0007669"/>
    <property type="project" value="GOC"/>
</dbReference>
<dbReference type="GO" id="GO:0042025">
    <property type="term" value="C:host cell nucleus"/>
    <property type="evidence" value="ECO:0007669"/>
    <property type="project" value="UniProtKB-SubCell"/>
</dbReference>
<dbReference type="GO" id="GO:0020002">
    <property type="term" value="C:host cell plasma membrane"/>
    <property type="evidence" value="ECO:0007669"/>
    <property type="project" value="UniProtKB-SubCell"/>
</dbReference>
<dbReference type="GO" id="GO:0072494">
    <property type="term" value="C:host multivesicular body"/>
    <property type="evidence" value="ECO:0007669"/>
    <property type="project" value="UniProtKB-SubCell"/>
</dbReference>
<dbReference type="GO" id="GO:0016020">
    <property type="term" value="C:membrane"/>
    <property type="evidence" value="ECO:0007669"/>
    <property type="project" value="UniProtKB-KW"/>
</dbReference>
<dbReference type="GO" id="GO:0019013">
    <property type="term" value="C:viral nucleocapsid"/>
    <property type="evidence" value="ECO:0007669"/>
    <property type="project" value="UniProtKB-KW"/>
</dbReference>
<dbReference type="GO" id="GO:0055036">
    <property type="term" value="C:virion membrane"/>
    <property type="evidence" value="ECO:0007669"/>
    <property type="project" value="UniProtKB-SubCell"/>
</dbReference>
<dbReference type="GO" id="GO:0004190">
    <property type="term" value="F:aspartic-type endopeptidase activity"/>
    <property type="evidence" value="ECO:0007669"/>
    <property type="project" value="UniProtKB-KW"/>
</dbReference>
<dbReference type="GO" id="GO:0003677">
    <property type="term" value="F:DNA binding"/>
    <property type="evidence" value="ECO:0007669"/>
    <property type="project" value="UniProtKB-KW"/>
</dbReference>
<dbReference type="GO" id="GO:0003887">
    <property type="term" value="F:DNA-directed DNA polymerase activity"/>
    <property type="evidence" value="ECO:0007669"/>
    <property type="project" value="UniProtKB-KW"/>
</dbReference>
<dbReference type="GO" id="GO:0004533">
    <property type="term" value="F:exoribonuclease H activity"/>
    <property type="evidence" value="ECO:0007669"/>
    <property type="project" value="UniProtKB-EC"/>
</dbReference>
<dbReference type="GO" id="GO:0008289">
    <property type="term" value="F:lipid binding"/>
    <property type="evidence" value="ECO:0007669"/>
    <property type="project" value="UniProtKB-KW"/>
</dbReference>
<dbReference type="GO" id="GO:0035613">
    <property type="term" value="F:RNA stem-loop binding"/>
    <property type="evidence" value="ECO:0007669"/>
    <property type="project" value="TreeGrafter"/>
</dbReference>
<dbReference type="GO" id="GO:0003964">
    <property type="term" value="F:RNA-directed DNA polymerase activity"/>
    <property type="evidence" value="ECO:0007669"/>
    <property type="project" value="UniProtKB-KW"/>
</dbReference>
<dbReference type="GO" id="GO:0004523">
    <property type="term" value="F:RNA-DNA hybrid ribonuclease activity"/>
    <property type="evidence" value="ECO:0007669"/>
    <property type="project" value="InterPro"/>
</dbReference>
<dbReference type="GO" id="GO:0005198">
    <property type="term" value="F:structural molecule activity"/>
    <property type="evidence" value="ECO:0007669"/>
    <property type="project" value="InterPro"/>
</dbReference>
<dbReference type="GO" id="GO:0008270">
    <property type="term" value="F:zinc ion binding"/>
    <property type="evidence" value="ECO:0007669"/>
    <property type="project" value="UniProtKB-KW"/>
</dbReference>
<dbReference type="GO" id="GO:0015074">
    <property type="term" value="P:DNA integration"/>
    <property type="evidence" value="ECO:0007669"/>
    <property type="project" value="UniProtKB-KW"/>
</dbReference>
<dbReference type="GO" id="GO:0006310">
    <property type="term" value="P:DNA recombination"/>
    <property type="evidence" value="ECO:0007669"/>
    <property type="project" value="UniProtKB-KW"/>
</dbReference>
<dbReference type="GO" id="GO:0075713">
    <property type="term" value="P:establishment of integrated proviral latency"/>
    <property type="evidence" value="ECO:0007669"/>
    <property type="project" value="UniProtKB-KW"/>
</dbReference>
<dbReference type="GO" id="GO:0006508">
    <property type="term" value="P:proteolysis"/>
    <property type="evidence" value="ECO:0007669"/>
    <property type="project" value="UniProtKB-KW"/>
</dbReference>
<dbReference type="GO" id="GO:0046718">
    <property type="term" value="P:symbiont entry into host cell"/>
    <property type="evidence" value="ECO:0007669"/>
    <property type="project" value="UniProtKB-KW"/>
</dbReference>
<dbReference type="GO" id="GO:0039657">
    <property type="term" value="P:symbiont-mediated suppression of host gene expression"/>
    <property type="evidence" value="ECO:0007669"/>
    <property type="project" value="UniProtKB-KW"/>
</dbReference>
<dbReference type="GO" id="GO:0044826">
    <property type="term" value="P:viral genome integration into host DNA"/>
    <property type="evidence" value="ECO:0007669"/>
    <property type="project" value="UniProtKB-KW"/>
</dbReference>
<dbReference type="GO" id="GO:0075732">
    <property type="term" value="P:viral penetration into host nucleus"/>
    <property type="evidence" value="ECO:0007669"/>
    <property type="project" value="UniProtKB-KW"/>
</dbReference>
<dbReference type="GO" id="GO:0075523">
    <property type="term" value="P:viral translational frameshifting"/>
    <property type="evidence" value="ECO:0007669"/>
    <property type="project" value="UniProtKB-KW"/>
</dbReference>
<dbReference type="CDD" id="cd05482">
    <property type="entry name" value="HIV_retropepsin_like"/>
    <property type="match status" value="1"/>
</dbReference>
<dbReference type="Gene3D" id="1.10.10.200">
    <property type="match status" value="1"/>
</dbReference>
<dbReference type="Gene3D" id="1.10.1200.30">
    <property type="match status" value="1"/>
</dbReference>
<dbReference type="Gene3D" id="3.30.70.270">
    <property type="match status" value="3"/>
</dbReference>
<dbReference type="Gene3D" id="2.40.70.10">
    <property type="entry name" value="Acid Proteases"/>
    <property type="match status" value="1"/>
</dbReference>
<dbReference type="Gene3D" id="3.10.10.10">
    <property type="entry name" value="HIV Type 1 Reverse Transcriptase, subunit A, domain 1"/>
    <property type="match status" value="1"/>
</dbReference>
<dbReference type="Gene3D" id="1.10.375.10">
    <property type="entry name" value="Human Immunodeficiency Virus Type 1 Capsid Protein"/>
    <property type="match status" value="1"/>
</dbReference>
<dbReference type="Gene3D" id="1.10.150.90">
    <property type="entry name" value="Immunodeficiency lentiviruses, gag gene matrix protein p17"/>
    <property type="match status" value="1"/>
</dbReference>
<dbReference type="Gene3D" id="2.30.30.10">
    <property type="entry name" value="Integrase, C-terminal domain superfamily, retroviral"/>
    <property type="match status" value="1"/>
</dbReference>
<dbReference type="Gene3D" id="3.30.420.10">
    <property type="entry name" value="Ribonuclease H-like superfamily/Ribonuclease H"/>
    <property type="match status" value="2"/>
</dbReference>
<dbReference type="Gene3D" id="1.20.5.760">
    <property type="entry name" value="Single helix bin"/>
    <property type="match status" value="1"/>
</dbReference>
<dbReference type="Gene3D" id="4.10.60.10">
    <property type="entry name" value="Zinc finger, CCHC-type"/>
    <property type="match status" value="1"/>
</dbReference>
<dbReference type="InterPro" id="IPR043502">
    <property type="entry name" value="DNA/RNA_pol_sf"/>
</dbReference>
<dbReference type="InterPro" id="IPR045345">
    <property type="entry name" value="Gag_p24_C"/>
</dbReference>
<dbReference type="InterPro" id="IPR017856">
    <property type="entry name" value="Integrase-like_N"/>
</dbReference>
<dbReference type="InterPro" id="IPR036862">
    <property type="entry name" value="Integrase_C_dom_sf_retrovir"/>
</dbReference>
<dbReference type="InterPro" id="IPR001037">
    <property type="entry name" value="Integrase_C_retrovir"/>
</dbReference>
<dbReference type="InterPro" id="IPR001584">
    <property type="entry name" value="Integrase_cat-core"/>
</dbReference>
<dbReference type="InterPro" id="IPR003308">
    <property type="entry name" value="Integrase_Zn-bd_dom_N"/>
</dbReference>
<dbReference type="InterPro" id="IPR000071">
    <property type="entry name" value="Lentvrl_matrix_N"/>
</dbReference>
<dbReference type="InterPro" id="IPR012344">
    <property type="entry name" value="Matrix_HIV/RSV_N"/>
</dbReference>
<dbReference type="InterPro" id="IPR001995">
    <property type="entry name" value="Peptidase_A2_cat"/>
</dbReference>
<dbReference type="InterPro" id="IPR021109">
    <property type="entry name" value="Peptidase_aspartic_dom_sf"/>
</dbReference>
<dbReference type="InterPro" id="IPR034170">
    <property type="entry name" value="Retropepsin-like_cat_dom"/>
</dbReference>
<dbReference type="InterPro" id="IPR018061">
    <property type="entry name" value="Retropepsins"/>
</dbReference>
<dbReference type="InterPro" id="IPR008916">
    <property type="entry name" value="Retrov_capsid_C"/>
</dbReference>
<dbReference type="InterPro" id="IPR008919">
    <property type="entry name" value="Retrov_capsid_N"/>
</dbReference>
<dbReference type="InterPro" id="IPR010999">
    <property type="entry name" value="Retrovr_matrix"/>
</dbReference>
<dbReference type="InterPro" id="IPR043128">
    <property type="entry name" value="Rev_trsase/Diguanyl_cyclase"/>
</dbReference>
<dbReference type="InterPro" id="IPR012337">
    <property type="entry name" value="RNaseH-like_sf"/>
</dbReference>
<dbReference type="InterPro" id="IPR002156">
    <property type="entry name" value="RNaseH_domain"/>
</dbReference>
<dbReference type="InterPro" id="IPR036397">
    <property type="entry name" value="RNaseH_sf"/>
</dbReference>
<dbReference type="InterPro" id="IPR000477">
    <property type="entry name" value="RT_dom"/>
</dbReference>
<dbReference type="InterPro" id="IPR010659">
    <property type="entry name" value="RVT_connect"/>
</dbReference>
<dbReference type="InterPro" id="IPR010661">
    <property type="entry name" value="RVT_thumb"/>
</dbReference>
<dbReference type="InterPro" id="IPR001878">
    <property type="entry name" value="Znf_CCHC"/>
</dbReference>
<dbReference type="InterPro" id="IPR036875">
    <property type="entry name" value="Znf_CCHC_sf"/>
</dbReference>
<dbReference type="PANTHER" id="PTHR41694">
    <property type="entry name" value="ENDOGENOUS RETROVIRUS GROUP K MEMBER POL PROTEIN"/>
    <property type="match status" value="1"/>
</dbReference>
<dbReference type="PANTHER" id="PTHR41694:SF3">
    <property type="entry name" value="RNA-DIRECTED DNA POLYMERASE-RELATED"/>
    <property type="match status" value="1"/>
</dbReference>
<dbReference type="Pfam" id="PF00540">
    <property type="entry name" value="Gag_p17"/>
    <property type="match status" value="1"/>
</dbReference>
<dbReference type="Pfam" id="PF00607">
    <property type="entry name" value="Gag_p24"/>
    <property type="match status" value="1"/>
</dbReference>
<dbReference type="Pfam" id="PF19317">
    <property type="entry name" value="Gag_p24_C"/>
    <property type="match status" value="1"/>
</dbReference>
<dbReference type="Pfam" id="PF00552">
    <property type="entry name" value="IN_DBD_C"/>
    <property type="match status" value="1"/>
</dbReference>
<dbReference type="Pfam" id="PF02022">
    <property type="entry name" value="Integrase_Zn"/>
    <property type="match status" value="1"/>
</dbReference>
<dbReference type="Pfam" id="PF00075">
    <property type="entry name" value="RNase_H"/>
    <property type="match status" value="1"/>
</dbReference>
<dbReference type="Pfam" id="PF00665">
    <property type="entry name" value="rve"/>
    <property type="match status" value="1"/>
</dbReference>
<dbReference type="Pfam" id="PF00077">
    <property type="entry name" value="RVP"/>
    <property type="match status" value="1"/>
</dbReference>
<dbReference type="Pfam" id="PF00078">
    <property type="entry name" value="RVT_1"/>
    <property type="match status" value="1"/>
</dbReference>
<dbReference type="Pfam" id="PF06815">
    <property type="entry name" value="RVT_connect"/>
    <property type="match status" value="1"/>
</dbReference>
<dbReference type="Pfam" id="PF06817">
    <property type="entry name" value="RVT_thumb"/>
    <property type="match status" value="1"/>
</dbReference>
<dbReference type="Pfam" id="PF00098">
    <property type="entry name" value="zf-CCHC"/>
    <property type="match status" value="2"/>
</dbReference>
<dbReference type="PRINTS" id="PR00234">
    <property type="entry name" value="HIV1MATRIX"/>
</dbReference>
<dbReference type="SMART" id="SM00343">
    <property type="entry name" value="ZnF_C2HC"/>
    <property type="match status" value="2"/>
</dbReference>
<dbReference type="SUPFAM" id="SSF50630">
    <property type="entry name" value="Acid proteases"/>
    <property type="match status" value="1"/>
</dbReference>
<dbReference type="SUPFAM" id="SSF50122">
    <property type="entry name" value="DNA-binding domain of retroviral integrase"/>
    <property type="match status" value="1"/>
</dbReference>
<dbReference type="SUPFAM" id="SSF56672">
    <property type="entry name" value="DNA/RNA polymerases"/>
    <property type="match status" value="1"/>
</dbReference>
<dbReference type="SUPFAM" id="SSF46919">
    <property type="entry name" value="N-terminal Zn binding domain of HIV integrase"/>
    <property type="match status" value="1"/>
</dbReference>
<dbReference type="SUPFAM" id="SSF47836">
    <property type="entry name" value="Retroviral matrix proteins"/>
    <property type="match status" value="1"/>
</dbReference>
<dbReference type="SUPFAM" id="SSF47353">
    <property type="entry name" value="Retrovirus capsid dimerization domain-like"/>
    <property type="match status" value="1"/>
</dbReference>
<dbReference type="SUPFAM" id="SSF47943">
    <property type="entry name" value="Retrovirus capsid protein, N-terminal core domain"/>
    <property type="match status" value="1"/>
</dbReference>
<dbReference type="SUPFAM" id="SSF57756">
    <property type="entry name" value="Retrovirus zinc finger-like domains"/>
    <property type="match status" value="1"/>
</dbReference>
<dbReference type="SUPFAM" id="SSF53098">
    <property type="entry name" value="Ribonuclease H-like"/>
    <property type="match status" value="2"/>
</dbReference>
<dbReference type="PROSITE" id="PS50175">
    <property type="entry name" value="ASP_PROT_RETROV"/>
    <property type="match status" value="1"/>
</dbReference>
<dbReference type="PROSITE" id="PS50994">
    <property type="entry name" value="INTEGRASE"/>
    <property type="match status" value="1"/>
</dbReference>
<dbReference type="PROSITE" id="PS51027">
    <property type="entry name" value="INTEGRASE_DBD"/>
    <property type="match status" value="1"/>
</dbReference>
<dbReference type="PROSITE" id="PS50879">
    <property type="entry name" value="RNASE_H_1"/>
    <property type="match status" value="1"/>
</dbReference>
<dbReference type="PROSITE" id="PS50878">
    <property type="entry name" value="RT_POL"/>
    <property type="match status" value="1"/>
</dbReference>
<dbReference type="PROSITE" id="PS50158">
    <property type="entry name" value="ZF_CCHC"/>
    <property type="match status" value="2"/>
</dbReference>
<dbReference type="PROSITE" id="PS50876">
    <property type="entry name" value="ZF_INTEGRASE"/>
    <property type="match status" value="1"/>
</dbReference>
<sequence>MGARNSVLRGKKADELEKIRLRPGGKKKYKLKHIVWAANELDRFGLAESLLESKEGCQKILTVLDPLVPTGSENLKSLFNTVCVIWCIHAEEKVKDTEGAKQIVQRHLVAETGTAEKMPNTSRPTAPPSGKNFPVQQVAGNYTHIPLSPGTLNAWVKLVEEKKFGAEVVPGFQALSEGCTPYDINQMLNCVGDHQAAMQIIREIINEEAADWDVAHPIPGPLPAGQLREPRGSDIAGTTSTVEEQIQWMFRPQNPVPVGNIYRRWIQIGLQKCVRMYNPTNILDINQGPKEPFQSYVDRFYKSLRAEQTDPAVKNWMTQTLLIQNANPDCKLVLKGLGMNPTLEEMLTTCQGVGGPGQKARLMAEALKEVMAPAPIPFAAAQQRKTFKCWNCGKEGHSARQWSAPRRQGCWKCGKSGHVMANCPDRQAGFLRDWPLGKEGPQLPRGPSPAGANTNSTPIGSSSGPTGEIYAARKKAKGAERETVQGSDRGLTAFRAGRDTMQGDDRGLAAPQFSLWKRPVVTAHIEGQPVEVLLDTRANDSIVAGIELGSNYSPKIVGGIGGFINTKEYKNVEIEVLGKRVKATIMTGDTPINIFGRNVLTALGMSLNLPVAKIEPIKIMLKPGKDGPRLKQWPLTKEKIEALKEICEKMEKEGQLEEAPPTNPYNTPTFAIKKKDKNKWRMLIDFRELNKVTQDFTEIQLGIPHPAGLAKKRRITVLDVGDAYFSIPLHEDFRQYTAFTLPSVNNAEPGKRYIYKVLPQGWKGSPAIFQYTMRQILEPFRKANEDVIIIQYMDDILIASDRTDLEHDKVVLQLKELLNGLGFSTPDEKFQKDPPYRWMGYELWPTKWKLQKIQLPQKEVWTVNDIQKLVGVLNWAAQIYPGIKTKHLCRLIRGKMTLTEEVQWTELAEAELEENRIILSQKQEGHYYQEEKKLEATVQKDQDNQWTYKVHQGEKILKGGKICKDKKYPYQRVRLLAQVVQKIGKEALVIWGRIPKFHLPVERDTWEQWWDNYWQVTWIPDWDFVSTPPLVRLAFNLVGEPVPGAETFYTDGSCNRQSKEGKAGYITDRGRDRVKVLEQTTNQQAELEAFAMALTDSGPKANIIVDSQYVMGIVAGQPTESENRIVNQIIEEMIKKEAIYVAWVPAHKGIGGNQEVDHLVSQGIRQVLFLEKIEPAQEEHEKYHSNIKELSHKFGIPKLVARQIVNTCAHVQQKGEAIHGQVNAELGTWQMDCTHLEGKVIIVAVHVASGFIEAEVIPQESGRQTALFLLKLASRWPITHLHTDNGANFTSQEVKMVAWWVGIEQTFGVPYNPQSQGVVEAMNHHLKNQIDRIREQANTVETIVLMAVHCMNFKRRGGIGDMTPAERIINMITTEQEIQFLQAKNSKLKNFRVYFREGRDQLWKGPGELLWKGDGAVIVKVGTEIKVVPRRKAKIIKDYGGRQEMDSGSHLEGAREDGEMA</sequence>
<proteinExistence type="inferred from homology"/>
<evidence type="ECO:0000250" key="1"/>
<evidence type="ECO:0000250" key="2">
    <source>
        <dbReference type="UniProtKB" id="P03348"/>
    </source>
</evidence>
<evidence type="ECO:0000250" key="3">
    <source>
        <dbReference type="UniProtKB" id="P03366"/>
    </source>
</evidence>
<evidence type="ECO:0000250" key="4">
    <source>
        <dbReference type="UniProtKB" id="P03367"/>
    </source>
</evidence>
<evidence type="ECO:0000250" key="5">
    <source>
        <dbReference type="UniProtKB" id="P04585"/>
    </source>
</evidence>
<evidence type="ECO:0000250" key="6">
    <source>
        <dbReference type="UniProtKB" id="P04591"/>
    </source>
</evidence>
<evidence type="ECO:0000250" key="7">
    <source>
        <dbReference type="UniProtKB" id="P12493"/>
    </source>
</evidence>
<evidence type="ECO:0000250" key="8">
    <source>
        <dbReference type="UniProtKB" id="P12497"/>
    </source>
</evidence>
<evidence type="ECO:0000255" key="9"/>
<evidence type="ECO:0000255" key="10">
    <source>
        <dbReference type="PROSITE-ProRule" id="PRU00047"/>
    </source>
</evidence>
<evidence type="ECO:0000255" key="11">
    <source>
        <dbReference type="PROSITE-ProRule" id="PRU00275"/>
    </source>
</evidence>
<evidence type="ECO:0000255" key="12">
    <source>
        <dbReference type="PROSITE-ProRule" id="PRU00405"/>
    </source>
</evidence>
<evidence type="ECO:0000255" key="13">
    <source>
        <dbReference type="PROSITE-ProRule" id="PRU00408"/>
    </source>
</evidence>
<evidence type="ECO:0000255" key="14">
    <source>
        <dbReference type="PROSITE-ProRule" id="PRU00450"/>
    </source>
</evidence>
<evidence type="ECO:0000255" key="15">
    <source>
        <dbReference type="PROSITE-ProRule" id="PRU00457"/>
    </source>
</evidence>
<evidence type="ECO:0000255" key="16">
    <source>
        <dbReference type="PROSITE-ProRule" id="PRU00506"/>
    </source>
</evidence>
<evidence type="ECO:0000256" key="17">
    <source>
        <dbReference type="SAM" id="MobiDB-lite"/>
    </source>
</evidence>
<evidence type="ECO:0000305" key="18"/>
<feature type="initiator methionine" description="Removed; by host" evidence="1">
    <location>
        <position position="1"/>
    </location>
</feature>
<feature type="chain" id="PRO_0000261297" description="Gag-Pol polyprotein">
    <location>
        <begin position="2"/>
        <end position="1461"/>
    </location>
</feature>
<feature type="chain" id="PRO_0000042526" description="Matrix protein p17" evidence="1">
    <location>
        <begin position="2"/>
        <end position="133"/>
    </location>
</feature>
<feature type="chain" id="PRO_0000042527" description="Capsid protein p24" evidence="1">
    <location>
        <begin position="134"/>
        <end position="363"/>
    </location>
</feature>
<feature type="peptide" id="PRO_0000042529" description="Spacer peptide 1" evidence="1">
    <location>
        <begin position="364"/>
        <end position="380"/>
    </location>
</feature>
<feature type="chain" id="PRO_0000042530" description="Nucleocapsid protein p7" evidence="1">
    <location>
        <begin position="381"/>
        <end position="429"/>
    </location>
</feature>
<feature type="peptide" id="PRO_0000246746" description="Transframe peptide" evidence="9">
    <location>
        <begin position="430"/>
        <end position="443"/>
    </location>
</feature>
<feature type="chain" id="PRO_0000042532" description="p6-pol" evidence="9">
    <location>
        <begin position="444"/>
        <end position="510"/>
    </location>
</feature>
<feature type="chain" id="PRO_0000038673" description="Protease" evidence="1">
    <location>
        <begin position="511"/>
        <end position="609"/>
    </location>
</feature>
<feature type="chain" id="PRO_0000042533" description="Reverse transcriptase/ribonuclease H" evidence="1">
    <location>
        <begin position="610"/>
        <end position="1168"/>
    </location>
</feature>
<feature type="chain" id="PRO_0000042534" description="p51 RT" evidence="1">
    <location>
        <begin position="610"/>
        <end position="1048"/>
    </location>
</feature>
<feature type="chain" id="PRO_0000042535" description="p15" evidence="1">
    <location>
        <begin position="1049"/>
        <end position="1168"/>
    </location>
</feature>
<feature type="chain" id="PRO_0000042536" description="Integrase" evidence="1">
    <location>
        <begin position="1169"/>
        <end position="1461"/>
    </location>
</feature>
<feature type="domain" description="Peptidase A2" evidence="11">
    <location>
        <begin position="530"/>
        <end position="599"/>
    </location>
</feature>
<feature type="domain" description="Reverse transcriptase" evidence="12">
    <location>
        <begin position="653"/>
        <end position="843"/>
    </location>
</feature>
<feature type="domain" description="RNase H type-1" evidence="13">
    <location>
        <begin position="1042"/>
        <end position="1165"/>
    </location>
</feature>
<feature type="domain" description="Integrase catalytic" evidence="15">
    <location>
        <begin position="1221"/>
        <end position="1372"/>
    </location>
</feature>
<feature type="zinc finger region" description="CCHC-type 1" evidence="10">
    <location>
        <begin position="387"/>
        <end position="404"/>
    </location>
</feature>
<feature type="zinc finger region" description="CCHC-type 2" evidence="10">
    <location>
        <begin position="408"/>
        <end position="425"/>
    </location>
</feature>
<feature type="zinc finger region" description="Integrase-type; degenerate" evidence="14">
    <location>
        <begin position="1171"/>
        <end position="1212"/>
    </location>
</feature>
<feature type="DNA-binding region" description="Integrase-type" evidence="16">
    <location>
        <begin position="1391"/>
        <end position="1438"/>
    </location>
</feature>
<feature type="region of interest" description="Interaction with Gp41" evidence="8">
    <location>
        <begin position="7"/>
        <end position="31"/>
    </location>
</feature>
<feature type="region of interest" description="Interaction with human PPIA/CYPA and NUP153" evidence="8">
    <location>
        <begin position="189"/>
        <end position="226"/>
    </location>
</feature>
<feature type="region of interest" description="Dimerization/Multimerization of capsid protein p24" evidence="5">
    <location>
        <begin position="277"/>
        <end position="363"/>
    </location>
</feature>
<feature type="region of interest" description="Disordered" evidence="17">
    <location>
        <begin position="436"/>
        <end position="467"/>
    </location>
</feature>
<feature type="region of interest" description="Dimerization of protease" evidence="5">
    <location>
        <begin position="511"/>
        <end position="515"/>
    </location>
</feature>
<feature type="region of interest" description="Dimerization of protease" evidence="5">
    <location>
        <begin position="559"/>
        <end position="565"/>
    </location>
</feature>
<feature type="region of interest" description="Dimerization of protease" evidence="5">
    <location>
        <begin position="598"/>
        <end position="610"/>
    </location>
</feature>
<feature type="region of interest" description="RT 'primer grip'" evidence="1">
    <location>
        <begin position="836"/>
        <end position="844"/>
    </location>
</feature>
<feature type="short sequence motif" description="Nuclear export signal" evidence="1">
    <location>
        <begin position="16"/>
        <end position="22"/>
    </location>
</feature>
<feature type="short sequence motif" description="Nuclear localization signal" evidence="1">
    <location>
        <begin position="26"/>
        <end position="32"/>
    </location>
</feature>
<feature type="short sequence motif" description="Tryptophan repeat motif" evidence="1">
    <location>
        <begin position="1006"/>
        <end position="1022"/>
    </location>
</feature>
<feature type="compositionally biased region" description="Low complexity" evidence="17">
    <location>
        <begin position="453"/>
        <end position="467"/>
    </location>
</feature>
<feature type="active site" description="For protease activity; shared with dimeric partner" evidence="1">
    <location>
        <position position="535"/>
    </location>
</feature>
<feature type="binding site" evidence="1">
    <location>
        <position position="719"/>
    </location>
    <ligand>
        <name>Mg(2+)</name>
        <dbReference type="ChEBI" id="CHEBI:18420"/>
        <label>1</label>
        <note>catalytic; for reverse transcriptase activity</note>
    </ligand>
</feature>
<feature type="binding site" evidence="1">
    <location>
        <position position="794"/>
    </location>
    <ligand>
        <name>Mg(2+)</name>
        <dbReference type="ChEBI" id="CHEBI:18420"/>
        <label>1</label>
        <note>catalytic; for reverse transcriptase activity</note>
    </ligand>
</feature>
<feature type="binding site" evidence="1">
    <location>
        <position position="795"/>
    </location>
    <ligand>
        <name>Mg(2+)</name>
        <dbReference type="ChEBI" id="CHEBI:18420"/>
        <label>1</label>
        <note>catalytic; for reverse transcriptase activity</note>
    </ligand>
</feature>
<feature type="binding site" evidence="1">
    <location>
        <position position="1051"/>
    </location>
    <ligand>
        <name>Mg(2+)</name>
        <dbReference type="ChEBI" id="CHEBI:18420"/>
        <label>2</label>
        <note>catalytic; for RNase H activity</note>
    </ligand>
</feature>
<feature type="binding site" evidence="1">
    <location>
        <position position="1086"/>
    </location>
    <ligand>
        <name>Mg(2+)</name>
        <dbReference type="ChEBI" id="CHEBI:18420"/>
        <label>2</label>
        <note>catalytic; for RNase H activity</note>
    </ligand>
</feature>
<feature type="binding site" evidence="1">
    <location>
        <position position="1106"/>
    </location>
    <ligand>
        <name>Mg(2+)</name>
        <dbReference type="ChEBI" id="CHEBI:18420"/>
        <label>2</label>
        <note>catalytic; for RNase H activity</note>
    </ligand>
</feature>
<feature type="binding site" evidence="1">
    <location>
        <position position="1157"/>
    </location>
    <ligand>
        <name>Mg(2+)</name>
        <dbReference type="ChEBI" id="CHEBI:18420"/>
        <label>2</label>
        <note>catalytic; for RNase H activity</note>
    </ligand>
</feature>
<feature type="binding site" evidence="1">
    <location>
        <position position="1232"/>
    </location>
    <ligand>
        <name>Mg(2+)</name>
        <dbReference type="ChEBI" id="CHEBI:18420"/>
        <label>3</label>
        <note>catalytic; for integrase activity</note>
    </ligand>
</feature>
<feature type="binding site" evidence="1">
    <location>
        <position position="1284"/>
    </location>
    <ligand>
        <name>Mg(2+)</name>
        <dbReference type="ChEBI" id="CHEBI:18420"/>
        <label>3</label>
        <note>catalytic; for integrase activity</note>
    </ligand>
</feature>
<feature type="binding site" evidence="5">
    <location>
        <position position="1320"/>
    </location>
    <ligand>
        <name>Mg(2+)</name>
        <dbReference type="ChEBI" id="CHEBI:18420"/>
        <label>3</label>
        <note>catalytic; for integrase activity</note>
    </ligand>
</feature>
<feature type="site" description="Cleavage; by viral protease" evidence="1">
    <location>
        <begin position="133"/>
        <end position="134"/>
    </location>
</feature>
<feature type="site" description="Cis/trans isomerization of proline peptide bond; by human PPIA/CYPA" evidence="1">
    <location>
        <begin position="220"/>
        <end position="221"/>
    </location>
</feature>
<feature type="site" description="Cleavage; by viral protease" evidence="1">
    <location>
        <begin position="363"/>
        <end position="364"/>
    </location>
</feature>
<feature type="site" description="Cleavage; by viral protease" evidence="1">
    <location>
        <begin position="380"/>
        <end position="381"/>
    </location>
</feature>
<feature type="site" description="Cleavage; by viral protease" evidence="9">
    <location>
        <begin position="429"/>
        <end position="430"/>
    </location>
</feature>
<feature type="site" description="Cleavage; by viral protease" evidence="1">
    <location>
        <begin position="443"/>
        <end position="444"/>
    </location>
</feature>
<feature type="site" description="Cleavage; by viral protease" evidence="1">
    <location>
        <begin position="510"/>
        <end position="511"/>
    </location>
</feature>
<feature type="site" description="Cleavage; by viral protease" evidence="1">
    <location>
        <begin position="609"/>
        <end position="610"/>
    </location>
</feature>
<feature type="site" description="Essential for RT p66/p51 heterodimerization" evidence="1">
    <location>
        <position position="1009"/>
    </location>
</feature>
<feature type="site" description="Essential for RT p66/p51 heterodimerization" evidence="1">
    <location>
        <position position="1022"/>
    </location>
</feature>
<feature type="site" description="Cleavage; by viral protease; partial" evidence="1">
    <location>
        <begin position="1048"/>
        <end position="1049"/>
    </location>
</feature>
<feature type="site" description="Cleavage; by viral protease" evidence="1">
    <location>
        <begin position="1168"/>
        <end position="1169"/>
    </location>
</feature>
<feature type="lipid moiety-binding region" description="N-myristoyl glycine; by host" evidence="1">
    <location>
        <position position="2"/>
    </location>
</feature>
<gene>
    <name type="primary">gag-pol</name>
</gene>
<organismHost>
    <name type="scientific">Homo sapiens</name>
    <name type="common">Human</name>
    <dbReference type="NCBI Taxonomy" id="9606"/>
</organismHost>
<organism>
    <name type="scientific">Human immunodeficiency virus type 2 subtype A (isolate NIH-Z)</name>
    <name type="common">HIV-2</name>
    <dbReference type="NCBI Taxonomy" id="11719"/>
    <lineage>
        <taxon>Viruses</taxon>
        <taxon>Riboviria</taxon>
        <taxon>Pararnavirae</taxon>
        <taxon>Artverviricota</taxon>
        <taxon>Revtraviricetes</taxon>
        <taxon>Ortervirales</taxon>
        <taxon>Retroviridae</taxon>
        <taxon>Orthoretrovirinae</taxon>
        <taxon>Lentivirus</taxon>
        <taxon>Human immunodeficiency virus 2</taxon>
    </lineage>
</organism>
<name>POL_HV2NZ</name>
<accession>P05962</accession>
<accession>Q85571</accession>